<organism>
    <name type="scientific">Staphylococcus epidermidis (strain ATCC 35984 / DSM 28319 / BCRC 17069 / CCUG 31568 / BM 3577 / RP62A)</name>
    <dbReference type="NCBI Taxonomy" id="176279"/>
    <lineage>
        <taxon>Bacteria</taxon>
        <taxon>Bacillati</taxon>
        <taxon>Bacillota</taxon>
        <taxon>Bacilli</taxon>
        <taxon>Bacillales</taxon>
        <taxon>Staphylococcaceae</taxon>
        <taxon>Staphylococcus</taxon>
    </lineage>
</organism>
<dbReference type="EC" id="1.2.1.70" evidence="1"/>
<dbReference type="EMBL" id="CP000029">
    <property type="protein sequence ID" value="AAW54593.1"/>
    <property type="molecule type" value="Genomic_DNA"/>
</dbReference>
<dbReference type="RefSeq" id="WP_001830773.1">
    <property type="nucleotide sequence ID" value="NC_002976.3"/>
</dbReference>
<dbReference type="SMR" id="Q5HNN1"/>
<dbReference type="STRING" id="176279.SERP1236"/>
<dbReference type="GeneID" id="50018538"/>
<dbReference type="KEGG" id="ser:SERP1236"/>
<dbReference type="eggNOG" id="COG0373">
    <property type="taxonomic scope" value="Bacteria"/>
</dbReference>
<dbReference type="HOGENOM" id="CLU_035113_2_2_9"/>
<dbReference type="UniPathway" id="UPA00251">
    <property type="reaction ID" value="UER00316"/>
</dbReference>
<dbReference type="Proteomes" id="UP000000531">
    <property type="component" value="Chromosome"/>
</dbReference>
<dbReference type="GO" id="GO:0008883">
    <property type="term" value="F:glutamyl-tRNA reductase activity"/>
    <property type="evidence" value="ECO:0007669"/>
    <property type="project" value="UniProtKB-UniRule"/>
</dbReference>
<dbReference type="GO" id="GO:0050661">
    <property type="term" value="F:NADP binding"/>
    <property type="evidence" value="ECO:0007669"/>
    <property type="project" value="InterPro"/>
</dbReference>
<dbReference type="GO" id="GO:0006782">
    <property type="term" value="P:protoporphyrinogen IX biosynthetic process"/>
    <property type="evidence" value="ECO:0007669"/>
    <property type="project" value="UniProtKB-UniRule"/>
</dbReference>
<dbReference type="CDD" id="cd05213">
    <property type="entry name" value="NAD_bind_Glutamyl_tRNA_reduct"/>
    <property type="match status" value="1"/>
</dbReference>
<dbReference type="FunFam" id="3.30.460.30:FF:000001">
    <property type="entry name" value="Glutamyl-tRNA reductase"/>
    <property type="match status" value="1"/>
</dbReference>
<dbReference type="FunFam" id="3.40.50.720:FF:000031">
    <property type="entry name" value="Glutamyl-tRNA reductase"/>
    <property type="match status" value="1"/>
</dbReference>
<dbReference type="Gene3D" id="3.30.460.30">
    <property type="entry name" value="Glutamyl-tRNA reductase, N-terminal domain"/>
    <property type="match status" value="1"/>
</dbReference>
<dbReference type="Gene3D" id="3.40.50.720">
    <property type="entry name" value="NAD(P)-binding Rossmann-like Domain"/>
    <property type="match status" value="1"/>
</dbReference>
<dbReference type="HAMAP" id="MF_00087">
    <property type="entry name" value="Glu_tRNA_reductase"/>
    <property type="match status" value="1"/>
</dbReference>
<dbReference type="InterPro" id="IPR000343">
    <property type="entry name" value="4pyrrol_synth_GluRdtase"/>
</dbReference>
<dbReference type="InterPro" id="IPR015896">
    <property type="entry name" value="4pyrrol_synth_GluRdtase_dimer"/>
</dbReference>
<dbReference type="InterPro" id="IPR015895">
    <property type="entry name" value="4pyrrol_synth_GluRdtase_N"/>
</dbReference>
<dbReference type="InterPro" id="IPR018214">
    <property type="entry name" value="GluRdtase_CS"/>
</dbReference>
<dbReference type="InterPro" id="IPR036453">
    <property type="entry name" value="GluRdtase_dimer_dom_sf"/>
</dbReference>
<dbReference type="InterPro" id="IPR036343">
    <property type="entry name" value="GluRdtase_N_sf"/>
</dbReference>
<dbReference type="InterPro" id="IPR036291">
    <property type="entry name" value="NAD(P)-bd_dom_sf"/>
</dbReference>
<dbReference type="InterPro" id="IPR006151">
    <property type="entry name" value="Shikm_DH/Glu-tRNA_Rdtase"/>
</dbReference>
<dbReference type="NCBIfam" id="TIGR01035">
    <property type="entry name" value="hemA"/>
    <property type="match status" value="1"/>
</dbReference>
<dbReference type="PANTHER" id="PTHR43120">
    <property type="entry name" value="GLUTAMYL-TRNA REDUCTASE 1, CHLOROPLASTIC"/>
    <property type="match status" value="1"/>
</dbReference>
<dbReference type="PANTHER" id="PTHR43120:SF1">
    <property type="entry name" value="GLUTAMYL-TRNA REDUCTASE 1, CHLOROPLASTIC"/>
    <property type="match status" value="1"/>
</dbReference>
<dbReference type="Pfam" id="PF00745">
    <property type="entry name" value="GlutR_dimer"/>
    <property type="match status" value="1"/>
</dbReference>
<dbReference type="Pfam" id="PF05201">
    <property type="entry name" value="GlutR_N"/>
    <property type="match status" value="1"/>
</dbReference>
<dbReference type="Pfam" id="PF01488">
    <property type="entry name" value="Shikimate_DH"/>
    <property type="match status" value="1"/>
</dbReference>
<dbReference type="PIRSF" id="PIRSF000445">
    <property type="entry name" value="4pyrrol_synth_GluRdtase"/>
    <property type="match status" value="1"/>
</dbReference>
<dbReference type="SUPFAM" id="SSF69742">
    <property type="entry name" value="Glutamyl tRNA-reductase catalytic, N-terminal domain"/>
    <property type="match status" value="1"/>
</dbReference>
<dbReference type="SUPFAM" id="SSF69075">
    <property type="entry name" value="Glutamyl tRNA-reductase dimerization domain"/>
    <property type="match status" value="1"/>
</dbReference>
<dbReference type="SUPFAM" id="SSF51735">
    <property type="entry name" value="NAD(P)-binding Rossmann-fold domains"/>
    <property type="match status" value="1"/>
</dbReference>
<dbReference type="PROSITE" id="PS00747">
    <property type="entry name" value="GLUTR"/>
    <property type="match status" value="1"/>
</dbReference>
<comment type="function">
    <text evidence="1">Catalyzes the NADPH-dependent reduction of glutamyl-tRNA(Glu) to glutamate 1-semialdehyde (GSA).</text>
</comment>
<comment type="catalytic activity">
    <reaction evidence="1">
        <text>(S)-4-amino-5-oxopentanoate + tRNA(Glu) + NADP(+) = L-glutamyl-tRNA(Glu) + NADPH + H(+)</text>
        <dbReference type="Rhea" id="RHEA:12344"/>
        <dbReference type="Rhea" id="RHEA-COMP:9663"/>
        <dbReference type="Rhea" id="RHEA-COMP:9680"/>
        <dbReference type="ChEBI" id="CHEBI:15378"/>
        <dbReference type="ChEBI" id="CHEBI:57501"/>
        <dbReference type="ChEBI" id="CHEBI:57783"/>
        <dbReference type="ChEBI" id="CHEBI:58349"/>
        <dbReference type="ChEBI" id="CHEBI:78442"/>
        <dbReference type="ChEBI" id="CHEBI:78520"/>
        <dbReference type="EC" id="1.2.1.70"/>
    </reaction>
</comment>
<comment type="pathway">
    <text evidence="1">Porphyrin-containing compound metabolism; protoporphyrin-IX biosynthesis; 5-aminolevulinate from L-glutamyl-tRNA(Glu): step 1/2.</text>
</comment>
<comment type="subunit">
    <text evidence="1">Homodimer.</text>
</comment>
<comment type="domain">
    <text evidence="1">Possesses an unusual extended V-shaped dimeric structure with each monomer consisting of three distinct domains arranged along a curved 'spinal' alpha-helix. The N-terminal catalytic domain specifically recognizes the glutamate moiety of the substrate. The second domain is the NADPH-binding domain, and the third C-terminal domain is responsible for dimerization.</text>
</comment>
<comment type="miscellaneous">
    <text evidence="1">During catalysis, the active site Cys acts as a nucleophile attacking the alpha-carbonyl group of tRNA-bound glutamate with the formation of a thioester intermediate between enzyme and glutamate, and the concomitant release of tRNA(Glu). The thioester intermediate is finally reduced by direct hydride transfer from NADPH, to form the product GSA.</text>
</comment>
<comment type="similarity">
    <text evidence="1">Belongs to the glutamyl-tRNA reductase family.</text>
</comment>
<protein>
    <recommendedName>
        <fullName evidence="1">Glutamyl-tRNA reductase</fullName>
        <shortName evidence="1">GluTR</shortName>
        <ecNumber evidence="1">1.2.1.70</ecNumber>
    </recommendedName>
</protein>
<accession>Q5HNN1</accession>
<name>HEM1_STAEQ</name>
<gene>
    <name evidence="1" type="primary">hemA</name>
    <name type="ordered locus">SERP1236</name>
</gene>
<evidence type="ECO:0000255" key="1">
    <source>
        <dbReference type="HAMAP-Rule" id="MF_00087"/>
    </source>
</evidence>
<keyword id="KW-0521">NADP</keyword>
<keyword id="KW-0560">Oxidoreductase</keyword>
<keyword id="KW-0627">Porphyrin biosynthesis</keyword>
<keyword id="KW-1185">Reference proteome</keyword>
<reference key="1">
    <citation type="journal article" date="2005" name="J. Bacteriol.">
        <title>Insights on evolution of virulence and resistance from the complete genome analysis of an early methicillin-resistant Staphylococcus aureus strain and a biofilm-producing methicillin-resistant Staphylococcus epidermidis strain.</title>
        <authorList>
            <person name="Gill S.R."/>
            <person name="Fouts D.E."/>
            <person name="Archer G.L."/>
            <person name="Mongodin E.F."/>
            <person name="DeBoy R.T."/>
            <person name="Ravel J."/>
            <person name="Paulsen I.T."/>
            <person name="Kolonay J.F."/>
            <person name="Brinkac L.M."/>
            <person name="Beanan M.J."/>
            <person name="Dodson R.J."/>
            <person name="Daugherty S.C."/>
            <person name="Madupu R."/>
            <person name="Angiuoli S.V."/>
            <person name="Durkin A.S."/>
            <person name="Haft D.H."/>
            <person name="Vamathevan J.J."/>
            <person name="Khouri H."/>
            <person name="Utterback T.R."/>
            <person name="Lee C."/>
            <person name="Dimitrov G."/>
            <person name="Jiang L."/>
            <person name="Qin H."/>
            <person name="Weidman J."/>
            <person name="Tran K."/>
            <person name="Kang K.H."/>
            <person name="Hance I.R."/>
            <person name="Nelson K.E."/>
            <person name="Fraser C.M."/>
        </authorList>
    </citation>
    <scope>NUCLEOTIDE SEQUENCE [LARGE SCALE GENOMIC DNA]</scope>
    <source>
        <strain>ATCC 35984 / DSM 28319 / BCRC 17069 / CCUG 31568 / BM 3577 / RP62A</strain>
    </source>
</reference>
<proteinExistence type="inferred from homology"/>
<sequence length="448" mass="50152">MHFVAISINHRTADVTLREQVAFRDDALRLAHEDLYETKAILENVILSTCNRTEVYAIVDQVHTGRYYIQRFLARSFGFEVDDIKDMSEVKVGDDAVEHLLRVTSGLDSIVLGETQILGQMRDAFFLAQNTGTTGTIFNHLFKQAITFAKKAHSETDIADNAVSVSYAAVELAKKVFGKLKSKHAVVIGAGEMGELSLLNLLGSGISNVTIVNRTLSKAKILAEKHNVSYDSLSALPSLLETTDIVISSTSAEDYIITNSMVKTISETRKLDSLVLIDIAVPRDIEPGIDAITNIFNYDVDDLKDLVDANLRERQLAAETIAGQIPEEIDSHNEWVNMLGVVPVIRALREKAMNIQAETMESIDRKLPDLSERERKVISKHTKSIINQMLKDPIKQAKELSTDKKSNEKLELFQNIFDIEAEDPREKAKLEKESRAKEILAHRIFSFE</sequence>
<feature type="chain" id="PRO_0000114074" description="Glutamyl-tRNA reductase">
    <location>
        <begin position="1"/>
        <end position="448"/>
    </location>
</feature>
<feature type="active site" description="Nucleophile" evidence="1">
    <location>
        <position position="50"/>
    </location>
</feature>
<feature type="binding site" evidence="1">
    <location>
        <begin position="49"/>
        <end position="52"/>
    </location>
    <ligand>
        <name>substrate</name>
    </ligand>
</feature>
<feature type="binding site" evidence="1">
    <location>
        <position position="109"/>
    </location>
    <ligand>
        <name>substrate</name>
    </ligand>
</feature>
<feature type="binding site" evidence="1">
    <location>
        <begin position="114"/>
        <end position="116"/>
    </location>
    <ligand>
        <name>substrate</name>
    </ligand>
</feature>
<feature type="binding site" evidence="1">
    <location>
        <position position="120"/>
    </location>
    <ligand>
        <name>substrate</name>
    </ligand>
</feature>
<feature type="binding site" evidence="1">
    <location>
        <begin position="189"/>
        <end position="194"/>
    </location>
    <ligand>
        <name>NADP(+)</name>
        <dbReference type="ChEBI" id="CHEBI:58349"/>
    </ligand>
</feature>
<feature type="site" description="Important for activity" evidence="1">
    <location>
        <position position="99"/>
    </location>
</feature>